<reference key="1">
    <citation type="submission" date="2008-02" db="EMBL/GenBank/DDBJ databases">
        <title>Complete sequence of Yersinia pseudotuberculosis YPIII.</title>
        <authorList>
            <consortium name="US DOE Joint Genome Institute"/>
            <person name="Copeland A."/>
            <person name="Lucas S."/>
            <person name="Lapidus A."/>
            <person name="Glavina del Rio T."/>
            <person name="Dalin E."/>
            <person name="Tice H."/>
            <person name="Bruce D."/>
            <person name="Goodwin L."/>
            <person name="Pitluck S."/>
            <person name="Munk A.C."/>
            <person name="Brettin T."/>
            <person name="Detter J.C."/>
            <person name="Han C."/>
            <person name="Tapia R."/>
            <person name="Schmutz J."/>
            <person name="Larimer F."/>
            <person name="Land M."/>
            <person name="Hauser L."/>
            <person name="Challacombe J.F."/>
            <person name="Green L."/>
            <person name="Lindler L.E."/>
            <person name="Nikolich M.P."/>
            <person name="Richardson P."/>
        </authorList>
    </citation>
    <scope>NUCLEOTIDE SEQUENCE [LARGE SCALE GENOMIC DNA]</scope>
    <source>
        <strain>YPIII</strain>
    </source>
</reference>
<feature type="chain" id="PRO_1000138679" description="D-amino acid dehydrogenase">
    <location>
        <begin position="1"/>
        <end position="434"/>
    </location>
</feature>
<feature type="binding site" evidence="1">
    <location>
        <begin position="3"/>
        <end position="17"/>
    </location>
    <ligand>
        <name>FAD</name>
        <dbReference type="ChEBI" id="CHEBI:57692"/>
    </ligand>
</feature>
<dbReference type="EC" id="1.4.99.-" evidence="1"/>
<dbReference type="EMBL" id="CP000950">
    <property type="protein sequence ID" value="ACA68393.1"/>
    <property type="molecule type" value="Genomic_DNA"/>
</dbReference>
<dbReference type="RefSeq" id="WP_012304098.1">
    <property type="nucleotide sequence ID" value="NZ_CP009792.1"/>
</dbReference>
<dbReference type="SMR" id="B1JLH4"/>
<dbReference type="KEGG" id="ypy:YPK_2107"/>
<dbReference type="PATRIC" id="fig|502800.11.peg.2782"/>
<dbReference type="UniPathway" id="UPA00043">
    <property type="reaction ID" value="UER00498"/>
</dbReference>
<dbReference type="GO" id="GO:0005737">
    <property type="term" value="C:cytoplasm"/>
    <property type="evidence" value="ECO:0007669"/>
    <property type="project" value="TreeGrafter"/>
</dbReference>
<dbReference type="GO" id="GO:0005886">
    <property type="term" value="C:plasma membrane"/>
    <property type="evidence" value="ECO:0007669"/>
    <property type="project" value="TreeGrafter"/>
</dbReference>
<dbReference type="GO" id="GO:0008718">
    <property type="term" value="F:D-amino-acid dehydrogenase activity"/>
    <property type="evidence" value="ECO:0007669"/>
    <property type="project" value="UniProtKB-UniRule"/>
</dbReference>
<dbReference type="GO" id="GO:0055130">
    <property type="term" value="P:D-alanine catabolic process"/>
    <property type="evidence" value="ECO:0007669"/>
    <property type="project" value="UniProtKB-UniPathway"/>
</dbReference>
<dbReference type="FunFam" id="3.50.50.60:FF:000020">
    <property type="entry name" value="D-amino acid dehydrogenase"/>
    <property type="match status" value="1"/>
</dbReference>
<dbReference type="Gene3D" id="3.30.9.10">
    <property type="entry name" value="D-Amino Acid Oxidase, subunit A, domain 2"/>
    <property type="match status" value="1"/>
</dbReference>
<dbReference type="Gene3D" id="3.50.50.60">
    <property type="entry name" value="FAD/NAD(P)-binding domain"/>
    <property type="match status" value="2"/>
</dbReference>
<dbReference type="HAMAP" id="MF_01202">
    <property type="entry name" value="DadA"/>
    <property type="match status" value="1"/>
</dbReference>
<dbReference type="InterPro" id="IPR023080">
    <property type="entry name" value="DadA"/>
</dbReference>
<dbReference type="InterPro" id="IPR006076">
    <property type="entry name" value="FAD-dep_OxRdtase"/>
</dbReference>
<dbReference type="InterPro" id="IPR036188">
    <property type="entry name" value="FAD/NAD-bd_sf"/>
</dbReference>
<dbReference type="NCBIfam" id="NF001933">
    <property type="entry name" value="PRK00711.1"/>
    <property type="match status" value="1"/>
</dbReference>
<dbReference type="PANTHER" id="PTHR13847:SF280">
    <property type="entry name" value="D-AMINO ACID DEHYDROGENASE"/>
    <property type="match status" value="1"/>
</dbReference>
<dbReference type="PANTHER" id="PTHR13847">
    <property type="entry name" value="SARCOSINE DEHYDROGENASE-RELATED"/>
    <property type="match status" value="1"/>
</dbReference>
<dbReference type="Pfam" id="PF01266">
    <property type="entry name" value="DAO"/>
    <property type="match status" value="1"/>
</dbReference>
<dbReference type="SUPFAM" id="SSF54373">
    <property type="entry name" value="FAD-linked reductases, C-terminal domain"/>
    <property type="match status" value="1"/>
</dbReference>
<dbReference type="SUPFAM" id="SSF51905">
    <property type="entry name" value="FAD/NAD(P)-binding domain"/>
    <property type="match status" value="1"/>
</dbReference>
<comment type="function">
    <text evidence="1">Oxidative deamination of D-amino acids.</text>
</comment>
<comment type="catalytic activity">
    <reaction evidence="1">
        <text>a D-alpha-amino acid + A + H2O = a 2-oxocarboxylate + AH2 + NH4(+)</text>
        <dbReference type="Rhea" id="RHEA:18125"/>
        <dbReference type="ChEBI" id="CHEBI:13193"/>
        <dbReference type="ChEBI" id="CHEBI:15377"/>
        <dbReference type="ChEBI" id="CHEBI:17499"/>
        <dbReference type="ChEBI" id="CHEBI:28938"/>
        <dbReference type="ChEBI" id="CHEBI:35179"/>
        <dbReference type="ChEBI" id="CHEBI:59871"/>
    </reaction>
</comment>
<comment type="cofactor">
    <cofactor evidence="1">
        <name>FAD</name>
        <dbReference type="ChEBI" id="CHEBI:57692"/>
    </cofactor>
</comment>
<comment type="pathway">
    <text>Amino-acid degradation; D-alanine degradation; NH(3) and pyruvate from D-alanine: step 1/1.</text>
</comment>
<comment type="similarity">
    <text evidence="1">Belongs to the DadA oxidoreductase family.</text>
</comment>
<evidence type="ECO:0000255" key="1">
    <source>
        <dbReference type="HAMAP-Rule" id="MF_01202"/>
    </source>
</evidence>
<proteinExistence type="inferred from homology"/>
<protein>
    <recommendedName>
        <fullName evidence="1">D-amino acid dehydrogenase</fullName>
        <ecNumber evidence="1">1.4.99.-</ecNumber>
    </recommendedName>
</protein>
<sequence length="434" mass="47234">MRVVILGSGVVGVTSAWYLAKEGHDVTVIDRQDGPAQETSAGNAGQISPGYAAPWAAPGVPLKAIKWMFQRHAPLAIRLDGSSLQLRWMWQMLRNCDTSHYMVNKSRMVRLAEYSRDCLKDLRAATGIQYEGRQGGTLQLFRTEQQFDNAAKDIAVLDDAGVPYSLLTAEQLATVEPALAKVAHKLTGGLRLPNDETGDCKLFTERLAKMAEQAGVKFIFNRSVDKLLVEGDQIAGVLCGDDIIKADAYVVAFGAYSTALLAGLVSIPVYPLKGYSLTIPITDPASAPFSTVLDETYKIAITRFDDRIRVGGMAEIVGFNTQLAPARRETLEMVVRDLYPHGGDISQAVFWSGLRPMTPDGTPIVGRTPLKNLYLNTGHGTLGWTMACGSGQLLADIIQGRRPAIVADDLSVARYRTGFQPLNIAPLHDIHPIR</sequence>
<organism>
    <name type="scientific">Yersinia pseudotuberculosis serotype O:3 (strain YPIII)</name>
    <dbReference type="NCBI Taxonomy" id="502800"/>
    <lineage>
        <taxon>Bacteria</taxon>
        <taxon>Pseudomonadati</taxon>
        <taxon>Pseudomonadota</taxon>
        <taxon>Gammaproteobacteria</taxon>
        <taxon>Enterobacterales</taxon>
        <taxon>Yersiniaceae</taxon>
        <taxon>Yersinia</taxon>
    </lineage>
</organism>
<accession>B1JLH4</accession>
<gene>
    <name evidence="1" type="primary">dadA</name>
    <name type="ordered locus">YPK_2107</name>
</gene>
<name>DADA_YERPY</name>
<keyword id="KW-0274">FAD</keyword>
<keyword id="KW-0285">Flavoprotein</keyword>
<keyword id="KW-0560">Oxidoreductase</keyword>